<gene>
    <name type="primary">citS</name>
    <name type="synonym">yflR</name>
    <name type="ordered locus">BSU07580</name>
</gene>
<feature type="chain" id="PRO_0000074735" description="Sensor protein CitS">
    <location>
        <begin position="1"/>
        <end position="542"/>
    </location>
</feature>
<feature type="topological domain" description="Cytoplasmic" evidence="1">
    <location>
        <begin position="1"/>
        <end position="13"/>
    </location>
</feature>
<feature type="transmembrane region" description="Helical" evidence="1">
    <location>
        <begin position="14"/>
        <end position="34"/>
    </location>
</feature>
<feature type="topological domain" description="Extracellular" evidence="1">
    <location>
        <begin position="35"/>
        <end position="175"/>
    </location>
</feature>
<feature type="transmembrane region" description="Helical" evidence="1">
    <location>
        <begin position="176"/>
        <end position="196"/>
    </location>
</feature>
<feature type="topological domain" description="Cytoplasmic" evidence="1">
    <location>
        <begin position="197"/>
        <end position="542"/>
    </location>
</feature>
<feature type="domain" description="PAS">
    <location>
        <begin position="216"/>
        <end position="279"/>
    </location>
</feature>
<feature type="domain" description="Histidine kinase" evidence="2">
    <location>
        <begin position="336"/>
        <end position="528"/>
    </location>
</feature>
<feature type="modified residue" description="Phosphohistidine; by autocatalysis" evidence="2">
    <location>
        <position position="339"/>
    </location>
</feature>
<comment type="function">
    <text evidence="3">Member of the two-component regulatory system CitT/CitS. Regulates the expression of the citM-yflN operon. Functions probably as a membrane-associated protein kinase that phosphorylates CitT in response to environmental citrate or Mg(2+)-citrate complex.</text>
</comment>
<comment type="catalytic activity">
    <reaction>
        <text>ATP + protein L-histidine = ADP + protein N-phospho-L-histidine.</text>
        <dbReference type="EC" id="2.7.13.3"/>
    </reaction>
</comment>
<comment type="subcellular location">
    <subcellularLocation>
        <location evidence="4">Cell membrane</location>
        <topology evidence="4">Multi-pass membrane protein</topology>
    </subcellularLocation>
</comment>
<dbReference type="EC" id="2.7.13.3"/>
<dbReference type="EMBL" id="D86417">
    <property type="protein sequence ID" value="BAA22311.1"/>
    <property type="molecule type" value="Genomic_DNA"/>
</dbReference>
<dbReference type="EMBL" id="AL009126">
    <property type="protein sequence ID" value="CAB12587.1"/>
    <property type="molecule type" value="Genomic_DNA"/>
</dbReference>
<dbReference type="PIR" id="E69600">
    <property type="entry name" value="E69600"/>
</dbReference>
<dbReference type="RefSeq" id="NP_388639.1">
    <property type="nucleotide sequence ID" value="NC_000964.3"/>
</dbReference>
<dbReference type="RefSeq" id="WP_003242967.1">
    <property type="nucleotide sequence ID" value="NZ_OZ025638.1"/>
</dbReference>
<dbReference type="SMR" id="O34427"/>
<dbReference type="FunCoup" id="O34427">
    <property type="interactions" value="129"/>
</dbReference>
<dbReference type="IntAct" id="O34427">
    <property type="interactions" value="23"/>
</dbReference>
<dbReference type="STRING" id="224308.BSU07580"/>
<dbReference type="PaxDb" id="224308-BSU07580"/>
<dbReference type="DNASU" id="939687"/>
<dbReference type="EnsemblBacteria" id="CAB12587">
    <property type="protein sequence ID" value="CAB12587"/>
    <property type="gene ID" value="BSU_07580"/>
</dbReference>
<dbReference type="GeneID" id="939687"/>
<dbReference type="KEGG" id="bsu:BSU07580"/>
<dbReference type="PATRIC" id="fig|224308.179.peg.823"/>
<dbReference type="eggNOG" id="COG3290">
    <property type="taxonomic scope" value="Bacteria"/>
</dbReference>
<dbReference type="InParanoid" id="O34427"/>
<dbReference type="OrthoDB" id="9792686at2"/>
<dbReference type="PhylomeDB" id="O34427"/>
<dbReference type="BioCyc" id="BSUB:BSU07580-MONOMER"/>
<dbReference type="BRENDA" id="2.7.13.3">
    <property type="organism ID" value="658"/>
</dbReference>
<dbReference type="Proteomes" id="UP000001570">
    <property type="component" value="Chromosome"/>
</dbReference>
<dbReference type="GO" id="GO:0005886">
    <property type="term" value="C:plasma membrane"/>
    <property type="evidence" value="ECO:0007669"/>
    <property type="project" value="UniProtKB-SubCell"/>
</dbReference>
<dbReference type="GO" id="GO:0005524">
    <property type="term" value="F:ATP binding"/>
    <property type="evidence" value="ECO:0007669"/>
    <property type="project" value="UniProtKB-KW"/>
</dbReference>
<dbReference type="GO" id="GO:0000155">
    <property type="term" value="F:phosphorelay sensor kinase activity"/>
    <property type="evidence" value="ECO:0000318"/>
    <property type="project" value="GO_Central"/>
</dbReference>
<dbReference type="CDD" id="cd16915">
    <property type="entry name" value="HATPase_DpiB-CitA-like"/>
    <property type="match status" value="1"/>
</dbReference>
<dbReference type="CDD" id="cd18773">
    <property type="entry name" value="PDC1_HK_sensor"/>
    <property type="match status" value="1"/>
</dbReference>
<dbReference type="FunFam" id="1.10.287.130:FF:000011">
    <property type="entry name" value="Sensor histidine kinase DcuS"/>
    <property type="match status" value="1"/>
</dbReference>
<dbReference type="FunFam" id="3.30.450.20:FF:000018">
    <property type="entry name" value="Sensor histidine kinase DcuS"/>
    <property type="match status" value="1"/>
</dbReference>
<dbReference type="FunFam" id="3.30.565.10:FF:000041">
    <property type="entry name" value="Sensor histidine kinase DcuS"/>
    <property type="match status" value="1"/>
</dbReference>
<dbReference type="Gene3D" id="1.10.287.130">
    <property type="match status" value="1"/>
</dbReference>
<dbReference type="Gene3D" id="3.30.565.10">
    <property type="entry name" value="Histidine kinase-like ATPase, C-terminal domain"/>
    <property type="match status" value="1"/>
</dbReference>
<dbReference type="Gene3D" id="3.30.450.20">
    <property type="entry name" value="PAS domain"/>
    <property type="match status" value="2"/>
</dbReference>
<dbReference type="InterPro" id="IPR036890">
    <property type="entry name" value="HATPase_C_sf"/>
</dbReference>
<dbReference type="InterPro" id="IPR005467">
    <property type="entry name" value="His_kinase_dom"/>
</dbReference>
<dbReference type="InterPro" id="IPR035965">
    <property type="entry name" value="PAS-like_dom_sf"/>
</dbReference>
<dbReference type="InterPro" id="IPR033463">
    <property type="entry name" value="sCache_3"/>
</dbReference>
<dbReference type="InterPro" id="IPR029151">
    <property type="entry name" value="Sensor-like_sf"/>
</dbReference>
<dbReference type="InterPro" id="IPR004358">
    <property type="entry name" value="Sig_transdc_His_kin-like_C"/>
</dbReference>
<dbReference type="InterPro" id="IPR016120">
    <property type="entry name" value="Sig_transdc_His_kin_SpoOB"/>
</dbReference>
<dbReference type="InterPro" id="IPR039506">
    <property type="entry name" value="SPOB_a"/>
</dbReference>
<dbReference type="PANTHER" id="PTHR43547:SF3">
    <property type="entry name" value="SENSOR PROTEIN CITS"/>
    <property type="match status" value="1"/>
</dbReference>
<dbReference type="PANTHER" id="PTHR43547">
    <property type="entry name" value="TWO-COMPONENT HISTIDINE KINASE"/>
    <property type="match status" value="1"/>
</dbReference>
<dbReference type="Pfam" id="PF02518">
    <property type="entry name" value="HATPase_c"/>
    <property type="match status" value="1"/>
</dbReference>
<dbReference type="Pfam" id="PF17203">
    <property type="entry name" value="sCache_3_2"/>
    <property type="match status" value="1"/>
</dbReference>
<dbReference type="Pfam" id="PF14689">
    <property type="entry name" value="SPOB_a"/>
    <property type="match status" value="1"/>
</dbReference>
<dbReference type="PRINTS" id="PR00344">
    <property type="entry name" value="BCTRLSENSOR"/>
</dbReference>
<dbReference type="SMART" id="SM00387">
    <property type="entry name" value="HATPase_c"/>
    <property type="match status" value="1"/>
</dbReference>
<dbReference type="SUPFAM" id="SSF55874">
    <property type="entry name" value="ATPase domain of HSP90 chaperone/DNA topoisomerase II/histidine kinase"/>
    <property type="match status" value="1"/>
</dbReference>
<dbReference type="SUPFAM" id="SSF55785">
    <property type="entry name" value="PYP-like sensor domain (PAS domain)"/>
    <property type="match status" value="1"/>
</dbReference>
<dbReference type="SUPFAM" id="SSF103190">
    <property type="entry name" value="Sensory domain-like"/>
    <property type="match status" value="1"/>
</dbReference>
<dbReference type="SUPFAM" id="SSF55890">
    <property type="entry name" value="Sporulation response regulatory protein Spo0B"/>
    <property type="match status" value="1"/>
</dbReference>
<dbReference type="PROSITE" id="PS50109">
    <property type="entry name" value="HIS_KIN"/>
    <property type="match status" value="1"/>
</dbReference>
<reference key="1">
    <citation type="journal article" date="1997" name="Gene">
        <title>Cloning and sequencing of a 35.7 kb in the 70 degree-73 degree region of the Bacillus subtilis genome reveal genes for a new two-component system, three spore germination proteins, an iron uptake system and a general stress response protein.</title>
        <authorList>
            <person name="Yamamoto H."/>
            <person name="Uchiyama S."/>
            <person name="Nugroho F.A."/>
            <person name="Sekiguchi J."/>
        </authorList>
    </citation>
    <scope>NUCLEOTIDE SEQUENCE [GENOMIC DNA]</scope>
    <source>
        <strain>168 / AC327</strain>
    </source>
</reference>
<reference key="2">
    <citation type="journal article" date="1997" name="Nature">
        <title>The complete genome sequence of the Gram-positive bacterium Bacillus subtilis.</title>
        <authorList>
            <person name="Kunst F."/>
            <person name="Ogasawara N."/>
            <person name="Moszer I."/>
            <person name="Albertini A.M."/>
            <person name="Alloni G."/>
            <person name="Azevedo V."/>
            <person name="Bertero M.G."/>
            <person name="Bessieres P."/>
            <person name="Bolotin A."/>
            <person name="Borchert S."/>
            <person name="Borriss R."/>
            <person name="Boursier L."/>
            <person name="Brans A."/>
            <person name="Braun M."/>
            <person name="Brignell S.C."/>
            <person name="Bron S."/>
            <person name="Brouillet S."/>
            <person name="Bruschi C.V."/>
            <person name="Caldwell B."/>
            <person name="Capuano V."/>
            <person name="Carter N.M."/>
            <person name="Choi S.-K."/>
            <person name="Codani J.-J."/>
            <person name="Connerton I.F."/>
            <person name="Cummings N.J."/>
            <person name="Daniel R.A."/>
            <person name="Denizot F."/>
            <person name="Devine K.M."/>
            <person name="Duesterhoeft A."/>
            <person name="Ehrlich S.D."/>
            <person name="Emmerson P.T."/>
            <person name="Entian K.-D."/>
            <person name="Errington J."/>
            <person name="Fabret C."/>
            <person name="Ferrari E."/>
            <person name="Foulger D."/>
            <person name="Fritz C."/>
            <person name="Fujita M."/>
            <person name="Fujita Y."/>
            <person name="Fuma S."/>
            <person name="Galizzi A."/>
            <person name="Galleron N."/>
            <person name="Ghim S.-Y."/>
            <person name="Glaser P."/>
            <person name="Goffeau A."/>
            <person name="Golightly E.J."/>
            <person name="Grandi G."/>
            <person name="Guiseppi G."/>
            <person name="Guy B.J."/>
            <person name="Haga K."/>
            <person name="Haiech J."/>
            <person name="Harwood C.R."/>
            <person name="Henaut A."/>
            <person name="Hilbert H."/>
            <person name="Holsappel S."/>
            <person name="Hosono S."/>
            <person name="Hullo M.-F."/>
            <person name="Itaya M."/>
            <person name="Jones L.-M."/>
            <person name="Joris B."/>
            <person name="Karamata D."/>
            <person name="Kasahara Y."/>
            <person name="Klaerr-Blanchard M."/>
            <person name="Klein C."/>
            <person name="Kobayashi Y."/>
            <person name="Koetter P."/>
            <person name="Koningstein G."/>
            <person name="Krogh S."/>
            <person name="Kumano M."/>
            <person name="Kurita K."/>
            <person name="Lapidus A."/>
            <person name="Lardinois S."/>
            <person name="Lauber J."/>
            <person name="Lazarevic V."/>
            <person name="Lee S.-M."/>
            <person name="Levine A."/>
            <person name="Liu H."/>
            <person name="Masuda S."/>
            <person name="Mauel C."/>
            <person name="Medigue C."/>
            <person name="Medina N."/>
            <person name="Mellado R.P."/>
            <person name="Mizuno M."/>
            <person name="Moestl D."/>
            <person name="Nakai S."/>
            <person name="Noback M."/>
            <person name="Noone D."/>
            <person name="O'Reilly M."/>
            <person name="Ogawa K."/>
            <person name="Ogiwara A."/>
            <person name="Oudega B."/>
            <person name="Park S.-H."/>
            <person name="Parro V."/>
            <person name="Pohl T.M."/>
            <person name="Portetelle D."/>
            <person name="Porwollik S."/>
            <person name="Prescott A.M."/>
            <person name="Presecan E."/>
            <person name="Pujic P."/>
            <person name="Purnelle B."/>
            <person name="Rapoport G."/>
            <person name="Rey M."/>
            <person name="Reynolds S."/>
            <person name="Rieger M."/>
            <person name="Rivolta C."/>
            <person name="Rocha E."/>
            <person name="Roche B."/>
            <person name="Rose M."/>
            <person name="Sadaie Y."/>
            <person name="Sato T."/>
            <person name="Scanlan E."/>
            <person name="Schleich S."/>
            <person name="Schroeter R."/>
            <person name="Scoffone F."/>
            <person name="Sekiguchi J."/>
            <person name="Sekowska A."/>
            <person name="Seror S.J."/>
            <person name="Serror P."/>
            <person name="Shin B.-S."/>
            <person name="Soldo B."/>
            <person name="Sorokin A."/>
            <person name="Tacconi E."/>
            <person name="Takagi T."/>
            <person name="Takahashi H."/>
            <person name="Takemaru K."/>
            <person name="Takeuchi M."/>
            <person name="Tamakoshi A."/>
            <person name="Tanaka T."/>
            <person name="Terpstra P."/>
            <person name="Tognoni A."/>
            <person name="Tosato V."/>
            <person name="Uchiyama S."/>
            <person name="Vandenbol M."/>
            <person name="Vannier F."/>
            <person name="Vassarotti A."/>
            <person name="Viari A."/>
            <person name="Wambutt R."/>
            <person name="Wedler E."/>
            <person name="Wedler H."/>
            <person name="Weitzenegger T."/>
            <person name="Winters P."/>
            <person name="Wipat A."/>
            <person name="Yamamoto H."/>
            <person name="Yamane K."/>
            <person name="Yasumoto K."/>
            <person name="Yata K."/>
            <person name="Yoshida K."/>
            <person name="Yoshikawa H.-F."/>
            <person name="Zumstein E."/>
            <person name="Yoshikawa H."/>
            <person name="Danchin A."/>
        </authorList>
    </citation>
    <scope>NUCLEOTIDE SEQUENCE [LARGE SCALE GENOMIC DNA]</scope>
    <source>
        <strain>168</strain>
    </source>
</reference>
<reference key="3">
    <citation type="journal article" date="2000" name="Mol. Microbiol.">
        <title>The CitST two-component system regulates the expression of the Mg-citrate transporter in Bacillus subtilis.</title>
        <authorList>
            <person name="Yamamoto H."/>
            <person name="Murata M."/>
            <person name="Sekiguchi J."/>
        </authorList>
    </citation>
    <scope>CHARACTERIZATION</scope>
    <source>
        <strain>168</strain>
    </source>
</reference>
<reference key="4">
    <citation type="journal article" date="2001" name="J. Bacteriol.">
        <title>Comprehensive DNA microarray analysis of Bacillus subtilis two-component regulatory systems.</title>
        <authorList>
            <person name="Kobayashi K."/>
            <person name="Ogura M."/>
            <person name="Yamaguchi H."/>
            <person name="Yoshida K."/>
            <person name="Ogasawara N."/>
            <person name="Tanaka T."/>
            <person name="Fujita Y."/>
        </authorList>
    </citation>
    <scope>FUNCTION</scope>
</reference>
<organism>
    <name type="scientific">Bacillus subtilis (strain 168)</name>
    <dbReference type="NCBI Taxonomy" id="224308"/>
    <lineage>
        <taxon>Bacteria</taxon>
        <taxon>Bacillati</taxon>
        <taxon>Bacillota</taxon>
        <taxon>Bacilli</taxon>
        <taxon>Bacillales</taxon>
        <taxon>Bacillaceae</taxon>
        <taxon>Bacillus</taxon>
    </lineage>
</organism>
<protein>
    <recommendedName>
        <fullName>Sensor protein CitS</fullName>
        <ecNumber>2.7.13.3</ecNumber>
    </recommendedName>
</protein>
<proteinExistence type="evidence at protein level"/>
<keyword id="KW-0067">ATP-binding</keyword>
<keyword id="KW-1003">Cell membrane</keyword>
<keyword id="KW-0418">Kinase</keyword>
<keyword id="KW-0472">Membrane</keyword>
<keyword id="KW-0547">Nucleotide-binding</keyword>
<keyword id="KW-0597">Phosphoprotein</keyword>
<keyword id="KW-1185">Reference proteome</keyword>
<keyword id="KW-0808">Transferase</keyword>
<keyword id="KW-0812">Transmembrane</keyword>
<keyword id="KW-1133">Transmembrane helix</keyword>
<keyword id="KW-0902">Two-component regulatory system</keyword>
<sequence length="542" mass="59891">MVKKRFHFSLQTKIMGLIAALLVFVIGVLTITLAVQHTQGERRQAEQLAVQTARTISYMPPVKELIERKDGHAAQTQEVIEQMKEQTGAFAIYVLNEKGDIRSASGKSGLKKLERSREILFGGSHVSETKADGRRVIRGSAPIIKEQKGYSQVIGSVSVDFLQTETEQSIKKHLRNLSVIAVLVLLLGFIGAAVLAKSIRKDTLGLEPHEIAALYRERNAMLFAIREGIIATNREGVVTMMNVSAAEMLKLPEPVIHLPIDDVMPGAGLMSVLEKGEMLPNQEVSVNDQVFIINTKVMNQGGQAYGIVVSFREKTELKKLIDTLTEVRKYSEDLRAQTHEFSNKLYAILGLLELGEYDEAIDLIKEEYAIQNEQHDLLFHNIHSQQVQAILLGKISKASEKKVKLVIDENSSLAPLPAHIGLSHLITIIGNLIDNAFEAVAEQSVKEVLFFITDMGHDIVIEVSDTGPGVPPEKIEAVFERGYSSKGMRRGYGLANVKDSVRELGGWIELANQKTGGAVFTVFIPKEKQRGNPFDSHRDCGG</sequence>
<evidence type="ECO:0000255" key="1"/>
<evidence type="ECO:0000255" key="2">
    <source>
        <dbReference type="PROSITE-ProRule" id="PRU00107"/>
    </source>
</evidence>
<evidence type="ECO:0000269" key="3">
    <source>
    </source>
</evidence>
<evidence type="ECO:0000305" key="4"/>
<accession>O34427</accession>
<name>CITS_BACSU</name>